<gene>
    <name evidence="1" type="primary">entS</name>
    <name type="ordered locus">ECED1_0588</name>
</gene>
<keyword id="KW-0997">Cell inner membrane</keyword>
<keyword id="KW-1003">Cell membrane</keyword>
<keyword id="KW-0472">Membrane</keyword>
<keyword id="KW-0812">Transmembrane</keyword>
<keyword id="KW-1133">Transmembrane helix</keyword>
<keyword id="KW-0813">Transport</keyword>
<accession>B7MRM9</accession>
<dbReference type="EMBL" id="CU928162">
    <property type="protein sequence ID" value="CAR06796.1"/>
    <property type="molecule type" value="Genomic_DNA"/>
</dbReference>
<dbReference type="RefSeq" id="WP_001041781.1">
    <property type="nucleotide sequence ID" value="NC_011745.1"/>
</dbReference>
<dbReference type="SMR" id="B7MRM9"/>
<dbReference type="KEGG" id="ecq:ECED1_0588"/>
<dbReference type="HOGENOM" id="CLU_034180_11_0_6"/>
<dbReference type="Proteomes" id="UP000000748">
    <property type="component" value="Chromosome"/>
</dbReference>
<dbReference type="GO" id="GO:0005886">
    <property type="term" value="C:plasma membrane"/>
    <property type="evidence" value="ECO:0007669"/>
    <property type="project" value="UniProtKB-SubCell"/>
</dbReference>
<dbReference type="GO" id="GO:0042931">
    <property type="term" value="F:enterobactin transmembrane transporter activity"/>
    <property type="evidence" value="ECO:0007669"/>
    <property type="project" value="InterPro"/>
</dbReference>
<dbReference type="CDD" id="cd06173">
    <property type="entry name" value="MFS_MefA_like"/>
    <property type="match status" value="1"/>
</dbReference>
<dbReference type="FunFam" id="1.20.1250.20:FF:000056">
    <property type="entry name" value="Enterobactin exporter EntS"/>
    <property type="match status" value="1"/>
</dbReference>
<dbReference type="Gene3D" id="1.20.1250.20">
    <property type="entry name" value="MFS general substrate transporter like domains"/>
    <property type="match status" value="1"/>
</dbReference>
<dbReference type="HAMAP" id="MF_01436">
    <property type="entry name" value="MFS_EntS"/>
    <property type="match status" value="1"/>
</dbReference>
<dbReference type="InterPro" id="IPR023722">
    <property type="entry name" value="Enterobactin_exp_EntS"/>
</dbReference>
<dbReference type="InterPro" id="IPR020846">
    <property type="entry name" value="MFS_dom"/>
</dbReference>
<dbReference type="InterPro" id="IPR036259">
    <property type="entry name" value="MFS_trans_sf"/>
</dbReference>
<dbReference type="InterPro" id="IPR010290">
    <property type="entry name" value="TM_effector"/>
</dbReference>
<dbReference type="NCBIfam" id="NF007792">
    <property type="entry name" value="PRK10489.1"/>
    <property type="match status" value="1"/>
</dbReference>
<dbReference type="PANTHER" id="PTHR23513:SF9">
    <property type="entry name" value="ENTEROBACTIN EXPORTER ENTS"/>
    <property type="match status" value="1"/>
</dbReference>
<dbReference type="PANTHER" id="PTHR23513">
    <property type="entry name" value="INTEGRAL MEMBRANE EFFLUX PROTEIN-RELATED"/>
    <property type="match status" value="1"/>
</dbReference>
<dbReference type="Pfam" id="PF05977">
    <property type="entry name" value="MFS_3"/>
    <property type="match status" value="1"/>
</dbReference>
<dbReference type="SUPFAM" id="SSF103473">
    <property type="entry name" value="MFS general substrate transporter"/>
    <property type="match status" value="1"/>
</dbReference>
<dbReference type="PROSITE" id="PS50850">
    <property type="entry name" value="MFS"/>
    <property type="match status" value="1"/>
</dbReference>
<name>ENTS_ECO81</name>
<sequence length="416" mass="43315">MNKQSWLLNLSLLKTHPAFRAVFLARFISIVSLGLLGVAVPVQIQMMTHSTWQVGLSVTLTGGAMFVGLMVGGVLADRYERKKVILLARGTCGIGFIGLCLNALLPEPSLLAIYLLGLWDGFFASLGVTALLAATPALVGRENLMQAGAITMLTVRLGSVISPMIGGLLLATGGVAWNYGLAAAGTFITLLPLLSLPALPPPPQPREHPLKSLLAGFRFLLASPLVGGIALLGGLLTMASAVRVLYPALADNWQMSAAQIGFLYAAIPLGAAIGALTSGKLAHSARPGLLMLLSTLGSFLAIGLFGLMPMWILGVICLALFGWLSAVSSLLQYTMLQTQTPEAMLGRINGLWTAQNVTGDAIGAALLGGLGAMMTPVASASASGFGLLIIGVLLLLVLVELRRFRQTPPQVTASDS</sequence>
<proteinExistence type="inferred from homology"/>
<reference key="1">
    <citation type="journal article" date="2009" name="PLoS Genet.">
        <title>Organised genome dynamics in the Escherichia coli species results in highly diverse adaptive paths.</title>
        <authorList>
            <person name="Touchon M."/>
            <person name="Hoede C."/>
            <person name="Tenaillon O."/>
            <person name="Barbe V."/>
            <person name="Baeriswyl S."/>
            <person name="Bidet P."/>
            <person name="Bingen E."/>
            <person name="Bonacorsi S."/>
            <person name="Bouchier C."/>
            <person name="Bouvet O."/>
            <person name="Calteau A."/>
            <person name="Chiapello H."/>
            <person name="Clermont O."/>
            <person name="Cruveiller S."/>
            <person name="Danchin A."/>
            <person name="Diard M."/>
            <person name="Dossat C."/>
            <person name="Karoui M.E."/>
            <person name="Frapy E."/>
            <person name="Garry L."/>
            <person name="Ghigo J.M."/>
            <person name="Gilles A.M."/>
            <person name="Johnson J."/>
            <person name="Le Bouguenec C."/>
            <person name="Lescat M."/>
            <person name="Mangenot S."/>
            <person name="Martinez-Jehanne V."/>
            <person name="Matic I."/>
            <person name="Nassif X."/>
            <person name="Oztas S."/>
            <person name="Petit M.A."/>
            <person name="Pichon C."/>
            <person name="Rouy Z."/>
            <person name="Ruf C.S."/>
            <person name="Schneider D."/>
            <person name="Tourret J."/>
            <person name="Vacherie B."/>
            <person name="Vallenet D."/>
            <person name="Medigue C."/>
            <person name="Rocha E.P.C."/>
            <person name="Denamur E."/>
        </authorList>
    </citation>
    <scope>NUCLEOTIDE SEQUENCE [LARGE SCALE GENOMIC DNA]</scope>
    <source>
        <strain>ED1a</strain>
    </source>
</reference>
<organism>
    <name type="scientific">Escherichia coli O81 (strain ED1a)</name>
    <dbReference type="NCBI Taxonomy" id="585397"/>
    <lineage>
        <taxon>Bacteria</taxon>
        <taxon>Pseudomonadati</taxon>
        <taxon>Pseudomonadota</taxon>
        <taxon>Gammaproteobacteria</taxon>
        <taxon>Enterobacterales</taxon>
        <taxon>Enterobacteriaceae</taxon>
        <taxon>Escherichia</taxon>
    </lineage>
</organism>
<feature type="chain" id="PRO_1000184906" description="Enterobactin exporter EntS">
    <location>
        <begin position="1"/>
        <end position="416"/>
    </location>
</feature>
<feature type="topological domain" description="Cytoplasmic" evidence="1">
    <location>
        <begin position="1"/>
        <end position="21"/>
    </location>
</feature>
<feature type="transmembrane region" description="Helical" evidence="1">
    <location>
        <begin position="22"/>
        <end position="42"/>
    </location>
</feature>
<feature type="topological domain" description="Periplasmic" evidence="1">
    <location>
        <begin position="43"/>
        <end position="55"/>
    </location>
</feature>
<feature type="transmembrane region" description="Helical" evidence="1">
    <location>
        <begin position="56"/>
        <end position="76"/>
    </location>
</feature>
<feature type="topological domain" description="Cytoplasmic" evidence="1">
    <location>
        <begin position="77"/>
        <end position="83"/>
    </location>
</feature>
<feature type="transmembrane region" description="Helical" evidence="1">
    <location>
        <begin position="84"/>
        <end position="104"/>
    </location>
</feature>
<feature type="topological domain" description="Periplasmic" evidence="1">
    <location>
        <begin position="105"/>
        <end position="109"/>
    </location>
</feature>
<feature type="transmembrane region" description="Helical" evidence="1">
    <location>
        <begin position="110"/>
        <end position="130"/>
    </location>
</feature>
<feature type="topological domain" description="Cytoplasmic" evidence="1">
    <location>
        <begin position="131"/>
        <end position="156"/>
    </location>
</feature>
<feature type="transmembrane region" description="Helical" evidence="1">
    <location>
        <begin position="157"/>
        <end position="177"/>
    </location>
</feature>
<feature type="topological domain" description="Periplasmic" evidence="1">
    <location>
        <position position="178"/>
    </location>
</feature>
<feature type="transmembrane region" description="Helical" evidence="1">
    <location>
        <begin position="179"/>
        <end position="199"/>
    </location>
</feature>
<feature type="topological domain" description="Cytoplasmic" evidence="1">
    <location>
        <begin position="200"/>
        <end position="218"/>
    </location>
</feature>
<feature type="transmembrane region" description="Helical" evidence="1">
    <location>
        <begin position="219"/>
        <end position="239"/>
    </location>
</feature>
<feature type="topological domain" description="Periplasmic" evidence="1">
    <location>
        <begin position="240"/>
        <end position="256"/>
    </location>
</feature>
<feature type="transmembrane region" description="Helical" evidence="1">
    <location>
        <begin position="257"/>
        <end position="277"/>
    </location>
</feature>
<feature type="topological domain" description="Cytoplasmic" evidence="1">
    <location>
        <begin position="278"/>
        <end position="287"/>
    </location>
</feature>
<feature type="transmembrane region" description="Helical" evidence="1">
    <location>
        <begin position="288"/>
        <end position="307"/>
    </location>
</feature>
<feature type="topological domain" description="Periplasmic" evidence="1">
    <location>
        <begin position="308"/>
        <end position="313"/>
    </location>
</feature>
<feature type="transmembrane region" description="Helical" evidence="1">
    <location>
        <begin position="314"/>
        <end position="336"/>
    </location>
</feature>
<feature type="topological domain" description="Cytoplasmic" evidence="1">
    <location>
        <begin position="337"/>
        <end position="356"/>
    </location>
</feature>
<feature type="transmembrane region" description="Helical" evidence="1">
    <location>
        <begin position="357"/>
        <end position="377"/>
    </location>
</feature>
<feature type="topological domain" description="Periplasmic" evidence="1">
    <location>
        <position position="378"/>
    </location>
</feature>
<feature type="transmembrane region" description="Helical" evidence="1">
    <location>
        <begin position="379"/>
        <end position="399"/>
    </location>
</feature>
<feature type="topological domain" description="Cytoplasmic" evidence="1">
    <location>
        <begin position="400"/>
        <end position="416"/>
    </location>
</feature>
<protein>
    <recommendedName>
        <fullName evidence="1">Enterobactin exporter EntS</fullName>
    </recommendedName>
</protein>
<comment type="function">
    <text evidence="1">Component of an export pathway for enterobactin.</text>
</comment>
<comment type="subcellular location">
    <subcellularLocation>
        <location evidence="1">Cell inner membrane</location>
        <topology evidence="1">Multi-pass membrane protein</topology>
    </subcellularLocation>
</comment>
<comment type="similarity">
    <text evidence="1">Belongs to the major facilitator superfamily. EntS (TC 2.A.1.38) family.</text>
</comment>
<evidence type="ECO:0000255" key="1">
    <source>
        <dbReference type="HAMAP-Rule" id="MF_01436"/>
    </source>
</evidence>